<reference key="1">
    <citation type="journal article" date="2000" name="Nature">
        <title>Sequence and analysis of chromosome 1 of the plant Arabidopsis thaliana.</title>
        <authorList>
            <person name="Theologis A."/>
            <person name="Ecker J.R."/>
            <person name="Palm C.J."/>
            <person name="Federspiel N.A."/>
            <person name="Kaul S."/>
            <person name="White O."/>
            <person name="Alonso J."/>
            <person name="Altafi H."/>
            <person name="Araujo R."/>
            <person name="Bowman C.L."/>
            <person name="Brooks S.Y."/>
            <person name="Buehler E."/>
            <person name="Chan A."/>
            <person name="Chao Q."/>
            <person name="Chen H."/>
            <person name="Cheuk R.F."/>
            <person name="Chin C.W."/>
            <person name="Chung M.K."/>
            <person name="Conn L."/>
            <person name="Conway A.B."/>
            <person name="Conway A.R."/>
            <person name="Creasy T.H."/>
            <person name="Dewar K."/>
            <person name="Dunn P."/>
            <person name="Etgu P."/>
            <person name="Feldblyum T.V."/>
            <person name="Feng J.-D."/>
            <person name="Fong B."/>
            <person name="Fujii C.Y."/>
            <person name="Gill J.E."/>
            <person name="Goldsmith A.D."/>
            <person name="Haas B."/>
            <person name="Hansen N.F."/>
            <person name="Hughes B."/>
            <person name="Huizar L."/>
            <person name="Hunter J.L."/>
            <person name="Jenkins J."/>
            <person name="Johnson-Hopson C."/>
            <person name="Khan S."/>
            <person name="Khaykin E."/>
            <person name="Kim C.J."/>
            <person name="Koo H.L."/>
            <person name="Kremenetskaia I."/>
            <person name="Kurtz D.B."/>
            <person name="Kwan A."/>
            <person name="Lam B."/>
            <person name="Langin-Hooper S."/>
            <person name="Lee A."/>
            <person name="Lee J.M."/>
            <person name="Lenz C.A."/>
            <person name="Li J.H."/>
            <person name="Li Y.-P."/>
            <person name="Lin X."/>
            <person name="Liu S.X."/>
            <person name="Liu Z.A."/>
            <person name="Luros J.S."/>
            <person name="Maiti R."/>
            <person name="Marziali A."/>
            <person name="Militscher J."/>
            <person name="Miranda M."/>
            <person name="Nguyen M."/>
            <person name="Nierman W.C."/>
            <person name="Osborne B.I."/>
            <person name="Pai G."/>
            <person name="Peterson J."/>
            <person name="Pham P.K."/>
            <person name="Rizzo M."/>
            <person name="Rooney T."/>
            <person name="Rowley D."/>
            <person name="Sakano H."/>
            <person name="Salzberg S.L."/>
            <person name="Schwartz J.R."/>
            <person name="Shinn P."/>
            <person name="Southwick A.M."/>
            <person name="Sun H."/>
            <person name="Tallon L.J."/>
            <person name="Tambunga G."/>
            <person name="Toriumi M.J."/>
            <person name="Town C.D."/>
            <person name="Utterback T."/>
            <person name="Van Aken S."/>
            <person name="Vaysberg M."/>
            <person name="Vysotskaia V.S."/>
            <person name="Walker M."/>
            <person name="Wu D."/>
            <person name="Yu G."/>
            <person name="Fraser C.M."/>
            <person name="Venter J.C."/>
            <person name="Davis R.W."/>
        </authorList>
    </citation>
    <scope>NUCLEOTIDE SEQUENCE [LARGE SCALE GENOMIC DNA]</scope>
    <source>
        <strain>cv. Columbia</strain>
    </source>
</reference>
<reference key="2">
    <citation type="journal article" date="2017" name="Plant J.">
        <title>Araport11: a complete reannotation of the Arabidopsis thaliana reference genome.</title>
        <authorList>
            <person name="Cheng C.Y."/>
            <person name="Krishnakumar V."/>
            <person name="Chan A.P."/>
            <person name="Thibaud-Nissen F."/>
            <person name="Schobel S."/>
            <person name="Town C.D."/>
        </authorList>
    </citation>
    <scope>GENOME REANNOTATION</scope>
    <source>
        <strain>cv. Columbia</strain>
    </source>
</reference>
<reference key="3">
    <citation type="submission" date="2004-01" db="EMBL/GenBank/DDBJ databases">
        <title>Arabidopsis ORF clones.</title>
        <authorList>
            <person name="Cheuk R.F."/>
            <person name="Chen H."/>
            <person name="Kim C.J."/>
            <person name="Shinn P."/>
            <person name="Ecker J.R."/>
        </authorList>
    </citation>
    <scope>NUCLEOTIDE SEQUENCE [LARGE SCALE MRNA]</scope>
    <source>
        <strain>cv. Columbia</strain>
    </source>
</reference>
<reference key="4">
    <citation type="journal article" date="2005" name="Environ. Mol. Mutagen.">
        <title>Components of nucleotide excision repair and DNA damage tolerance in Arabidopsis thaliana.</title>
        <authorList>
            <person name="Kunz B.A."/>
            <person name="Anderson H.J."/>
            <person name="Osmond M.J."/>
            <person name="Vonarx E.J."/>
        </authorList>
    </citation>
    <scope>COMPONENT OF TFIIH CORE COMPLEX</scope>
    <scope>NOMENCLATURE</scope>
</reference>
<comment type="function">
    <text evidence="1">Component of the general transcription and DNA repair factor IIH (TFIIH) core complex, which is involved in general and transcription-coupled nucleotide excision repair (NER) of damaged DNA and, when complexed to CAK, in RNA transcription by RNA polymerase II. In NER, TFIIH acts by opening DNA around the lesion to allow the excision of the damaged oligonucleotide and its replacement by a new DNA fragment. In transcription, TFIIH has an essential role in transcription initiation. When the pre-initiation complex (PIC) has been established, TFIIH is required for promoter opening and promoter escape. Phosphorylation of the C-terminal tail (CTD) of the largest subunit of RNA polymerase II by the kinase module CAK controls the initiation of transcription.</text>
</comment>
<comment type="subunit">
    <text evidence="1 4">Component of the 7-subunit TFIIH core complex composed of XPB, XPD, TFB1/GTF2H1, GTF2H2/P44, TFB4/GTF2H3, TFB2/GTF2H4 and TFB5/GTF2H5, which is active in NER. The core complex associates with the 3-subunit CDK-activating kinase (CAK) module composed of CYCH1/cyclin H1, CDKD and MAT1/At4g30820 to form the 10-subunit holoenzyme (holo-TFIIH) active in transcription.</text>
</comment>
<comment type="subcellular location">
    <subcellularLocation>
        <location evidence="3">Nucleus</location>
    </subcellularLocation>
</comment>
<comment type="similarity">
    <text evidence="3">Belongs to the TFB5 family.</text>
</comment>
<comment type="sequence caution" evidence="3">
    <conflict type="erroneous gene model prediction">
        <sequence resource="EMBL-CDS" id="AAF79634"/>
    </conflict>
</comment>
<gene>
    <name evidence="3" type="primary">TFB5</name>
    <name evidence="3" type="synonym">GTF2H5</name>
    <name evidence="5" type="ordered locus">At1g12400</name>
    <name evidence="6" type="ORF">F5O11.12</name>
</gene>
<evidence type="ECO:0000250" key="1">
    <source>
        <dbReference type="UniProtKB" id="Q6ZYL4"/>
    </source>
</evidence>
<evidence type="ECO:0000303" key="2">
    <source>
    </source>
</evidence>
<evidence type="ECO:0000305" key="3"/>
<evidence type="ECO:0000305" key="4">
    <source>
    </source>
</evidence>
<evidence type="ECO:0000312" key="5">
    <source>
        <dbReference type="Araport" id="AT1G12400"/>
    </source>
</evidence>
<evidence type="ECO:0000312" key="6">
    <source>
        <dbReference type="EMBL" id="AAF79634.1"/>
    </source>
</evidence>
<evidence type="ECO:0000312" key="7">
    <source>
        <dbReference type="EMBL" id="AAR92302.1"/>
    </source>
</evidence>
<keyword id="KW-0227">DNA damage</keyword>
<keyword id="KW-0234">DNA repair</keyword>
<keyword id="KW-0539">Nucleus</keyword>
<keyword id="KW-1185">Reference proteome</keyword>
<keyword id="KW-0804">Transcription</keyword>
<keyword id="KW-0805">Transcription regulation</keyword>
<protein>
    <recommendedName>
        <fullName>General transcription and DNA repair factor IIH subunit TFB5</fullName>
        <shortName evidence="2">AtTFB5</shortName>
        <shortName>TFIIH subunit TFB5</shortName>
    </recommendedName>
    <alternativeName>
        <fullName>RNA polymerase II transcription factor B subunit 5</fullName>
    </alternativeName>
</protein>
<accession>Q6NNM0</accession>
<accession>Q9LNA6</accession>
<sequence length="71" mass="8111">MVNAIKGVFVSCDIPMTQFIVNMNNSMPPSQKFIIHVLDSTHLFVQPHVEQMIRSAISDFRDQNSYEKPTS</sequence>
<organism evidence="7">
    <name type="scientific">Arabidopsis thaliana</name>
    <name type="common">Mouse-ear cress</name>
    <dbReference type="NCBI Taxonomy" id="3702"/>
    <lineage>
        <taxon>Eukaryota</taxon>
        <taxon>Viridiplantae</taxon>
        <taxon>Streptophyta</taxon>
        <taxon>Embryophyta</taxon>
        <taxon>Tracheophyta</taxon>
        <taxon>Spermatophyta</taxon>
        <taxon>Magnoliopsida</taxon>
        <taxon>eudicotyledons</taxon>
        <taxon>Gunneridae</taxon>
        <taxon>Pentapetalae</taxon>
        <taxon>rosids</taxon>
        <taxon>malvids</taxon>
        <taxon>Brassicales</taxon>
        <taxon>Brassicaceae</taxon>
        <taxon>Camelineae</taxon>
        <taxon>Arabidopsis</taxon>
    </lineage>
</organism>
<feature type="chain" id="PRO_0000435437" description="General transcription and DNA repair factor IIH subunit TFB5">
    <location>
        <begin position="1"/>
        <end position="71"/>
    </location>
</feature>
<proteinExistence type="inferred from homology"/>
<dbReference type="EMBL" id="AC025416">
    <property type="protein sequence ID" value="AAF79634.1"/>
    <property type="status" value="ALT_SEQ"/>
    <property type="molecule type" value="Genomic_DNA"/>
</dbReference>
<dbReference type="EMBL" id="CP002684">
    <property type="protein sequence ID" value="AEE28875.1"/>
    <property type="molecule type" value="Genomic_DNA"/>
</dbReference>
<dbReference type="EMBL" id="CP002684">
    <property type="protein sequence ID" value="ANM59075.1"/>
    <property type="molecule type" value="Genomic_DNA"/>
</dbReference>
<dbReference type="EMBL" id="BT010796">
    <property type="protein sequence ID" value="AAR24163.1"/>
    <property type="molecule type" value="mRNA"/>
</dbReference>
<dbReference type="EMBL" id="BT011266">
    <property type="protein sequence ID" value="AAR92302.1"/>
    <property type="molecule type" value="mRNA"/>
</dbReference>
<dbReference type="PIR" id="E86258">
    <property type="entry name" value="E86258"/>
</dbReference>
<dbReference type="RefSeq" id="NP_001321468.1">
    <property type="nucleotide sequence ID" value="NM_001332033.1"/>
</dbReference>
<dbReference type="RefSeq" id="NP_172702.1">
    <property type="nucleotide sequence ID" value="NM_101112.3"/>
</dbReference>
<dbReference type="SMR" id="Q6NNM0"/>
<dbReference type="FunCoup" id="Q6NNM0">
    <property type="interactions" value="2021"/>
</dbReference>
<dbReference type="STRING" id="3702.Q6NNM0"/>
<dbReference type="PaxDb" id="3702-AT1G12400.1"/>
<dbReference type="ProteomicsDB" id="246398"/>
<dbReference type="EnsemblPlants" id="AT1G12400.1">
    <property type="protein sequence ID" value="AT1G12400.1"/>
    <property type="gene ID" value="AT1G12400"/>
</dbReference>
<dbReference type="EnsemblPlants" id="AT1G12400.2">
    <property type="protein sequence ID" value="AT1G12400.2"/>
    <property type="gene ID" value="AT1G12400"/>
</dbReference>
<dbReference type="GeneID" id="837795"/>
<dbReference type="Gramene" id="AT1G12400.1">
    <property type="protein sequence ID" value="AT1G12400.1"/>
    <property type="gene ID" value="AT1G12400"/>
</dbReference>
<dbReference type="Gramene" id="AT1G12400.2">
    <property type="protein sequence ID" value="AT1G12400.2"/>
    <property type="gene ID" value="AT1G12400"/>
</dbReference>
<dbReference type="KEGG" id="ath:AT1G12400"/>
<dbReference type="Araport" id="AT1G12400"/>
<dbReference type="TAIR" id="AT1G12400"/>
<dbReference type="eggNOG" id="KOG3451">
    <property type="taxonomic scope" value="Eukaryota"/>
</dbReference>
<dbReference type="HOGENOM" id="CLU_166246_4_1_1"/>
<dbReference type="InParanoid" id="Q6NNM0"/>
<dbReference type="OMA" id="VKCDPAM"/>
<dbReference type="OrthoDB" id="354at2759"/>
<dbReference type="PRO" id="PR:Q6NNM0"/>
<dbReference type="Proteomes" id="UP000006548">
    <property type="component" value="Chromosome 1"/>
</dbReference>
<dbReference type="ExpressionAtlas" id="Q6NNM0">
    <property type="expression patterns" value="baseline and differential"/>
</dbReference>
<dbReference type="GO" id="GO:0000439">
    <property type="term" value="C:transcription factor TFIIH core complex"/>
    <property type="evidence" value="ECO:0007669"/>
    <property type="project" value="InterPro"/>
</dbReference>
<dbReference type="GO" id="GO:0006289">
    <property type="term" value="P:nucleotide-excision repair"/>
    <property type="evidence" value="ECO:0007669"/>
    <property type="project" value="InterPro"/>
</dbReference>
<dbReference type="GO" id="GO:0006367">
    <property type="term" value="P:transcription initiation at RNA polymerase II promoter"/>
    <property type="evidence" value="ECO:0007669"/>
    <property type="project" value="InterPro"/>
</dbReference>
<dbReference type="FunFam" id="3.30.70.1220:FF:000003">
    <property type="entry name" value="General transcription and DNA repair factor IIH subunit TFB5"/>
    <property type="match status" value="1"/>
</dbReference>
<dbReference type="Gene3D" id="3.30.70.1220">
    <property type="entry name" value="TFB5-like"/>
    <property type="match status" value="1"/>
</dbReference>
<dbReference type="InterPro" id="IPR035935">
    <property type="entry name" value="TFB5-like_sf"/>
</dbReference>
<dbReference type="InterPro" id="IPR009400">
    <property type="entry name" value="TFIIH_TTDA/Tfb5"/>
</dbReference>
<dbReference type="PANTHER" id="PTHR28580">
    <property type="entry name" value="GENERAL TRANSCRIPTION FACTOR IIH SUBUNIT 5"/>
    <property type="match status" value="1"/>
</dbReference>
<dbReference type="PANTHER" id="PTHR28580:SF1">
    <property type="entry name" value="GENERAL TRANSCRIPTION FACTOR IIH SUBUNIT 5"/>
    <property type="match status" value="1"/>
</dbReference>
<dbReference type="Pfam" id="PF06331">
    <property type="entry name" value="Tfb5"/>
    <property type="match status" value="1"/>
</dbReference>
<dbReference type="SMART" id="SM01395">
    <property type="entry name" value="Tbf5"/>
    <property type="match status" value="1"/>
</dbReference>
<dbReference type="SUPFAM" id="SSF142897">
    <property type="entry name" value="TFB5-like"/>
    <property type="match status" value="1"/>
</dbReference>
<name>TFB5_ARATH</name>